<evidence type="ECO:0000255" key="1">
    <source>
        <dbReference type="PROSITE-ProRule" id="PRU00532"/>
    </source>
</evidence>
<evidence type="ECO:0000269" key="2">
    <source>
    </source>
</evidence>
<evidence type="ECO:0000269" key="3">
    <source>
    </source>
</evidence>
<evidence type="ECO:0000303" key="4">
    <source>
    </source>
</evidence>
<evidence type="ECO:0000305" key="5"/>
<evidence type="ECO:0000305" key="6">
    <source>
    </source>
</evidence>
<evidence type="ECO:0000312" key="7">
    <source>
        <dbReference type="SGD" id="S000006397"/>
    </source>
</evidence>
<evidence type="ECO:0007829" key="8">
    <source>
        <dbReference type="PDB" id="1QSM"/>
    </source>
</evidence>
<evidence type="ECO:0007829" key="9">
    <source>
        <dbReference type="PDB" id="1QSO"/>
    </source>
</evidence>
<accession>Q06592</accession>
<accession>D6W4J3</accession>
<reference key="1">
    <citation type="journal article" date="1997" name="Nature">
        <title>The nucleotide sequence of Saccharomyces cerevisiae chromosome XVI.</title>
        <authorList>
            <person name="Bussey H."/>
            <person name="Storms R.K."/>
            <person name="Ahmed A."/>
            <person name="Albermann K."/>
            <person name="Allen E."/>
            <person name="Ansorge W."/>
            <person name="Araujo R."/>
            <person name="Aparicio A."/>
            <person name="Barrell B.G."/>
            <person name="Badcock K."/>
            <person name="Benes V."/>
            <person name="Botstein D."/>
            <person name="Bowman S."/>
            <person name="Brueckner M."/>
            <person name="Carpenter J."/>
            <person name="Cherry J.M."/>
            <person name="Chung E."/>
            <person name="Churcher C.M."/>
            <person name="Coster F."/>
            <person name="Davis K."/>
            <person name="Davis R.W."/>
            <person name="Dietrich F.S."/>
            <person name="Delius H."/>
            <person name="DiPaolo T."/>
            <person name="Dubois E."/>
            <person name="Duesterhoeft A."/>
            <person name="Duncan M."/>
            <person name="Floeth M."/>
            <person name="Fortin N."/>
            <person name="Friesen J.D."/>
            <person name="Fritz C."/>
            <person name="Goffeau A."/>
            <person name="Hall J."/>
            <person name="Hebling U."/>
            <person name="Heumann K."/>
            <person name="Hilbert H."/>
            <person name="Hillier L.W."/>
            <person name="Hunicke-Smith S."/>
            <person name="Hyman R.W."/>
            <person name="Johnston M."/>
            <person name="Kalman S."/>
            <person name="Kleine K."/>
            <person name="Komp C."/>
            <person name="Kurdi O."/>
            <person name="Lashkari D."/>
            <person name="Lew H."/>
            <person name="Lin A."/>
            <person name="Lin D."/>
            <person name="Louis E.J."/>
            <person name="Marathe R."/>
            <person name="Messenguy F."/>
            <person name="Mewes H.-W."/>
            <person name="Mirtipati S."/>
            <person name="Moestl D."/>
            <person name="Mueller-Auer S."/>
            <person name="Namath A."/>
            <person name="Nentwich U."/>
            <person name="Oefner P."/>
            <person name="Pearson D."/>
            <person name="Petel F.X."/>
            <person name="Pohl T.M."/>
            <person name="Purnelle B."/>
            <person name="Rajandream M.A."/>
            <person name="Rechmann S."/>
            <person name="Rieger M."/>
            <person name="Riles L."/>
            <person name="Roberts D."/>
            <person name="Schaefer M."/>
            <person name="Scharfe M."/>
            <person name="Scherens B."/>
            <person name="Schramm S."/>
            <person name="Schroeder M."/>
            <person name="Sdicu A.-M."/>
            <person name="Tettelin H."/>
            <person name="Urrestarazu L.A."/>
            <person name="Ushinsky S."/>
            <person name="Vierendeels F."/>
            <person name="Vissers S."/>
            <person name="Voss H."/>
            <person name="Walsh S.V."/>
            <person name="Wambutt R."/>
            <person name="Wang Y."/>
            <person name="Wedler E."/>
            <person name="Wedler H."/>
            <person name="Winnett E."/>
            <person name="Zhong W.-W."/>
            <person name="Zollner A."/>
            <person name="Vo D.H."/>
            <person name="Hani J."/>
        </authorList>
    </citation>
    <scope>NUCLEOTIDE SEQUENCE [LARGE SCALE GENOMIC DNA]</scope>
    <source>
        <strain>ATCC 204508 / S288c</strain>
    </source>
</reference>
<reference key="2">
    <citation type="journal article" date="2014" name="G3 (Bethesda)">
        <title>The reference genome sequence of Saccharomyces cerevisiae: Then and now.</title>
        <authorList>
            <person name="Engel S.R."/>
            <person name="Dietrich F.S."/>
            <person name="Fisk D.G."/>
            <person name="Binkley G."/>
            <person name="Balakrishnan R."/>
            <person name="Costanzo M.C."/>
            <person name="Dwight S.S."/>
            <person name="Hitz B.C."/>
            <person name="Karra K."/>
            <person name="Nash R.S."/>
            <person name="Weng S."/>
            <person name="Wong E.D."/>
            <person name="Lloyd P."/>
            <person name="Skrzypek M.S."/>
            <person name="Miyasato S.R."/>
            <person name="Simison M."/>
            <person name="Cherry J.M."/>
        </authorList>
    </citation>
    <scope>GENOME REANNOTATION</scope>
    <source>
        <strain>ATCC 204508 / S288c</strain>
    </source>
</reference>
<reference key="3">
    <citation type="journal article" date="2007" name="Genome Res.">
        <title>Approaching a complete repository of sequence-verified protein-encoding clones for Saccharomyces cerevisiae.</title>
        <authorList>
            <person name="Hu Y."/>
            <person name="Rolfs A."/>
            <person name="Bhullar B."/>
            <person name="Murthy T.V.S."/>
            <person name="Zhu C."/>
            <person name="Berger M.F."/>
            <person name="Camargo A.A."/>
            <person name="Kelley F."/>
            <person name="McCarron S."/>
            <person name="Jepson D."/>
            <person name="Richardson A."/>
            <person name="Raphael J."/>
            <person name="Moreira D."/>
            <person name="Taycher E."/>
            <person name="Zuo D."/>
            <person name="Mohr S."/>
            <person name="Kane M.F."/>
            <person name="Williamson J."/>
            <person name="Simpson A.J.G."/>
            <person name="Bulyk M.L."/>
            <person name="Harlow E."/>
            <person name="Marsischky G."/>
            <person name="Kolodner R.D."/>
            <person name="LaBaer J."/>
        </authorList>
    </citation>
    <scope>NUCLEOTIDE SEQUENCE [GENOMIC DNA]</scope>
    <source>
        <strain>ATCC 204508 / S288c</strain>
    </source>
</reference>
<reference key="4">
    <citation type="journal article" date="2013" name="J. Biol. Chem.">
        <title>Biochemical characterization of Hpa2 and Hpa3, two small closely related acetyltransferases from Saccharomyces cerevisiae.</title>
        <authorList>
            <person name="Sampath V."/>
            <person name="Liu B."/>
            <person name="Tafrov S."/>
            <person name="Srinivasan M."/>
            <person name="Rieger R."/>
            <person name="Chen E.I."/>
            <person name="Sternglanz R."/>
        </authorList>
    </citation>
    <scope>FUNCTION</scope>
    <scope>SUBSTRATE SPECIFICITY</scope>
</reference>
<reference key="5">
    <citation type="journal article" date="1999" name="J. Mol. Biol.">
        <title>Crystal structure of the histone acetyltransferase Hpa2: a tetrameric member of the Gcn5-related N-acetyltransferase superfamily.</title>
        <authorList>
            <person name="Angus-Hill M.L."/>
            <person name="Dutnall R.N."/>
            <person name="Tafrov S.T."/>
            <person name="Sternglanz R."/>
            <person name="Ramakrishnan V."/>
        </authorList>
    </citation>
    <scope>X-RAY CRYSTALLOGRAPHY (2.4 ANGSTROMS) OF 7-156 WITH ACETYL-COA</scope>
    <scope>SUBUNIT</scope>
</reference>
<dbReference type="EC" id="2.3.1.48" evidence="2 3"/>
<dbReference type="EMBL" id="U25841">
    <property type="protein sequence ID" value="AAB64622.1"/>
    <property type="molecule type" value="Genomic_DNA"/>
</dbReference>
<dbReference type="EMBL" id="AY558056">
    <property type="protein sequence ID" value="AAS56382.1"/>
    <property type="molecule type" value="Genomic_DNA"/>
</dbReference>
<dbReference type="EMBL" id="BK006949">
    <property type="protein sequence ID" value="DAA11609.1"/>
    <property type="molecule type" value="Genomic_DNA"/>
</dbReference>
<dbReference type="PIR" id="S58823">
    <property type="entry name" value="S58823"/>
</dbReference>
<dbReference type="RefSeq" id="NP_015519.1">
    <property type="nucleotide sequence ID" value="NM_001184290.1"/>
</dbReference>
<dbReference type="PDB" id="1QSM">
    <property type="method" value="X-ray"/>
    <property type="resolution" value="2.40 A"/>
    <property type="chains" value="A/B/C/D=5-156"/>
</dbReference>
<dbReference type="PDB" id="1QSO">
    <property type="method" value="X-ray"/>
    <property type="resolution" value="2.90 A"/>
    <property type="chains" value="A/B/C/D=8-156"/>
</dbReference>
<dbReference type="PDBsum" id="1QSM"/>
<dbReference type="PDBsum" id="1QSO"/>
<dbReference type="SMR" id="Q06592"/>
<dbReference type="BioGRID" id="36365">
    <property type="interactions" value="108"/>
</dbReference>
<dbReference type="ComplexPortal" id="CPX-2143">
    <property type="entry name" value="Hpa2 acetyltransferase"/>
</dbReference>
<dbReference type="DIP" id="DIP-2953N"/>
<dbReference type="FunCoup" id="Q06592">
    <property type="interactions" value="47"/>
</dbReference>
<dbReference type="IntAct" id="Q06592">
    <property type="interactions" value="4"/>
</dbReference>
<dbReference type="MINT" id="Q06592"/>
<dbReference type="STRING" id="4932.YPR193C"/>
<dbReference type="iPTMnet" id="Q06592"/>
<dbReference type="PaxDb" id="4932-YPR193C"/>
<dbReference type="PeptideAtlas" id="Q06592"/>
<dbReference type="EnsemblFungi" id="YPR193C_mRNA">
    <property type="protein sequence ID" value="YPR193C"/>
    <property type="gene ID" value="YPR193C"/>
</dbReference>
<dbReference type="GeneID" id="856323"/>
<dbReference type="KEGG" id="sce:YPR193C"/>
<dbReference type="AGR" id="SGD:S000006397"/>
<dbReference type="SGD" id="S000006397">
    <property type="gene designation" value="HPA2"/>
</dbReference>
<dbReference type="VEuPathDB" id="FungiDB:YPR193C"/>
<dbReference type="eggNOG" id="KOG3216">
    <property type="taxonomic scope" value="Eukaryota"/>
</dbReference>
<dbReference type="GeneTree" id="ENSGT00950000183121"/>
<dbReference type="HOGENOM" id="CLU_013985_32_1_1"/>
<dbReference type="InParanoid" id="Q06592"/>
<dbReference type="OMA" id="DGHIRYR"/>
<dbReference type="OrthoDB" id="7305308at2759"/>
<dbReference type="BioCyc" id="YEAST:G3O-34315-MONOMER"/>
<dbReference type="BRENDA" id="2.3.1.48">
    <property type="organism ID" value="984"/>
</dbReference>
<dbReference type="BioGRID-ORCS" id="856323">
    <property type="hits" value="0 hits in 10 CRISPR screens"/>
</dbReference>
<dbReference type="EvolutionaryTrace" id="Q06592"/>
<dbReference type="PRO" id="PR:Q06592"/>
<dbReference type="Proteomes" id="UP000002311">
    <property type="component" value="Chromosome XVI"/>
</dbReference>
<dbReference type="RNAct" id="Q06592">
    <property type="molecule type" value="protein"/>
</dbReference>
<dbReference type="GO" id="GO:0005737">
    <property type="term" value="C:cytoplasm"/>
    <property type="evidence" value="ECO:0007005"/>
    <property type="project" value="SGD"/>
</dbReference>
<dbReference type="GO" id="GO:1990331">
    <property type="term" value="C:Hpa2 acetyltransferase complex"/>
    <property type="evidence" value="ECO:0000353"/>
    <property type="project" value="ComplexPortal"/>
</dbReference>
<dbReference type="GO" id="GO:0005634">
    <property type="term" value="C:nucleus"/>
    <property type="evidence" value="ECO:0000303"/>
    <property type="project" value="ComplexPortal"/>
</dbReference>
<dbReference type="GO" id="GO:0004402">
    <property type="term" value="F:histone acetyltransferase activity"/>
    <property type="evidence" value="ECO:0007669"/>
    <property type="project" value="UniProtKB-EC"/>
</dbReference>
<dbReference type="GO" id="GO:0042802">
    <property type="term" value="F:identical protein binding"/>
    <property type="evidence" value="ECO:0000353"/>
    <property type="project" value="IntAct"/>
</dbReference>
<dbReference type="GO" id="GO:0008080">
    <property type="term" value="F:N-acetyltransferase activity"/>
    <property type="evidence" value="ECO:0000314"/>
    <property type="project" value="SGD"/>
</dbReference>
<dbReference type="GO" id="GO:0032917">
    <property type="term" value="P:polyamine acetylation"/>
    <property type="evidence" value="ECO:0000314"/>
    <property type="project" value="ComplexPortal"/>
</dbReference>
<dbReference type="CDD" id="cd04301">
    <property type="entry name" value="NAT_SF"/>
    <property type="match status" value="1"/>
</dbReference>
<dbReference type="FunFam" id="3.40.630.30:FF:000066">
    <property type="entry name" value="Histone acetyltransferase"/>
    <property type="match status" value="1"/>
</dbReference>
<dbReference type="Gene3D" id="3.40.630.30">
    <property type="match status" value="1"/>
</dbReference>
<dbReference type="InterPro" id="IPR016181">
    <property type="entry name" value="Acyl_CoA_acyltransferase"/>
</dbReference>
<dbReference type="InterPro" id="IPR051016">
    <property type="entry name" value="Diverse_Substrate_AcTransf"/>
</dbReference>
<dbReference type="InterPro" id="IPR000182">
    <property type="entry name" value="GNAT_dom"/>
</dbReference>
<dbReference type="PANTHER" id="PTHR10545">
    <property type="entry name" value="DIAMINE N-ACETYLTRANSFERASE"/>
    <property type="match status" value="1"/>
</dbReference>
<dbReference type="PANTHER" id="PTHR10545:SF29">
    <property type="entry name" value="GH14572P-RELATED"/>
    <property type="match status" value="1"/>
</dbReference>
<dbReference type="Pfam" id="PF00583">
    <property type="entry name" value="Acetyltransf_1"/>
    <property type="match status" value="1"/>
</dbReference>
<dbReference type="SUPFAM" id="SSF55729">
    <property type="entry name" value="Acyl-CoA N-acyltransferases (Nat)"/>
    <property type="match status" value="1"/>
</dbReference>
<dbReference type="PROSITE" id="PS51186">
    <property type="entry name" value="GNAT"/>
    <property type="match status" value="1"/>
</dbReference>
<comment type="function">
    <text evidence="3">N-acetyltransferase that acetylates histone H3 at 'Lys-14' and histone H4 at 'Lys-5' and 'Lys-12'. Also acetylates polyamines like putrescine, spermidine and spermine, and certain other small basic proteins like nuclear HMG proteins.</text>
</comment>
<comment type="catalytic activity">
    <reaction evidence="2 3">
        <text>L-lysyl-[protein] + acetyl-CoA = N(6)-acetyl-L-lysyl-[protein] + CoA + H(+)</text>
        <dbReference type="Rhea" id="RHEA:45948"/>
        <dbReference type="Rhea" id="RHEA-COMP:9752"/>
        <dbReference type="Rhea" id="RHEA-COMP:10731"/>
        <dbReference type="ChEBI" id="CHEBI:15378"/>
        <dbReference type="ChEBI" id="CHEBI:29969"/>
        <dbReference type="ChEBI" id="CHEBI:57287"/>
        <dbReference type="ChEBI" id="CHEBI:57288"/>
        <dbReference type="ChEBI" id="CHEBI:61930"/>
        <dbReference type="EC" id="2.3.1.48"/>
    </reaction>
</comment>
<comment type="subunit">
    <text evidence="2">Forms homodimers in the absence, and homotetramers in the presence of acetyl-CoA.</text>
</comment>
<comment type="interaction">
    <interactant intactId="EBI-34205">
        <id>Q06592</id>
    </interactant>
    <interactant intactId="EBI-34205">
        <id>Q06592</id>
        <label>HPA2</label>
    </interactant>
    <organismsDiffer>false</organismsDiffer>
    <experiments>3</experiments>
</comment>
<comment type="PTM">
    <text evidence="6">Autoacetylates in an intermolecular reaction.</text>
</comment>
<comment type="similarity">
    <text evidence="5">Belongs to the acetyltransferase family. GNAT subfamily.</text>
</comment>
<name>HPA2_YEAST</name>
<keyword id="KW-0002">3D-structure</keyword>
<keyword id="KW-0012">Acyltransferase</keyword>
<keyword id="KW-0156">Chromatin regulator</keyword>
<keyword id="KW-1185">Reference proteome</keyword>
<keyword id="KW-0808">Transferase</keyword>
<feature type="chain" id="PRO_0000074633" description="Histone acetyltransferase HPA2">
    <location>
        <begin position="1"/>
        <end position="156"/>
    </location>
</feature>
<feature type="domain" description="N-acetyltransferase" evidence="1">
    <location>
        <begin position="9"/>
        <end position="156"/>
    </location>
</feature>
<feature type="binding site" evidence="2">
    <location>
        <begin position="93"/>
        <end position="106"/>
    </location>
    <ligand>
        <name>acetyl-CoA</name>
        <dbReference type="ChEBI" id="CHEBI:57288"/>
    </ligand>
</feature>
<feature type="site" description="Important for catalytic activity" evidence="6">
    <location>
        <position position="139"/>
    </location>
</feature>
<feature type="strand" evidence="8">
    <location>
        <begin position="9"/>
        <end position="13"/>
    </location>
</feature>
<feature type="helix" evidence="8">
    <location>
        <begin position="16"/>
        <end position="18"/>
    </location>
</feature>
<feature type="helix" evidence="8">
    <location>
        <begin position="19"/>
        <end position="32"/>
    </location>
</feature>
<feature type="helix" evidence="8">
    <location>
        <begin position="39"/>
        <end position="50"/>
    </location>
</feature>
<feature type="turn" evidence="9">
    <location>
        <begin position="52"/>
        <end position="54"/>
    </location>
</feature>
<feature type="strand" evidence="8">
    <location>
        <begin position="56"/>
        <end position="66"/>
    </location>
</feature>
<feature type="strand" evidence="8">
    <location>
        <begin position="69"/>
        <end position="78"/>
    </location>
</feature>
<feature type="strand" evidence="8">
    <location>
        <begin position="87"/>
        <end position="95"/>
    </location>
</feature>
<feature type="helix" evidence="8">
    <location>
        <begin position="97"/>
        <end position="99"/>
    </location>
</feature>
<feature type="strand" evidence="8">
    <location>
        <begin position="101"/>
        <end position="103"/>
    </location>
</feature>
<feature type="helix" evidence="8">
    <location>
        <begin position="104"/>
        <end position="118"/>
    </location>
</feature>
<feature type="strand" evidence="8">
    <location>
        <begin position="124"/>
        <end position="129"/>
    </location>
</feature>
<feature type="helix" evidence="8">
    <location>
        <begin position="133"/>
        <end position="142"/>
    </location>
</feature>
<feature type="strand" evidence="8">
    <location>
        <begin position="143"/>
        <end position="145"/>
    </location>
</feature>
<feature type="strand" evidence="8">
    <location>
        <begin position="147"/>
        <end position="153"/>
    </location>
</feature>
<organism>
    <name type="scientific">Saccharomyces cerevisiae (strain ATCC 204508 / S288c)</name>
    <name type="common">Baker's yeast</name>
    <dbReference type="NCBI Taxonomy" id="559292"/>
    <lineage>
        <taxon>Eukaryota</taxon>
        <taxon>Fungi</taxon>
        <taxon>Dikarya</taxon>
        <taxon>Ascomycota</taxon>
        <taxon>Saccharomycotina</taxon>
        <taxon>Saccharomycetes</taxon>
        <taxon>Saccharomycetales</taxon>
        <taxon>Saccharomycetaceae</taxon>
        <taxon>Saccharomyces</taxon>
    </lineage>
</organism>
<gene>
    <name evidence="4" type="primary">HPA2</name>
    <name evidence="7" type="ordered locus">YPR193C</name>
    <name type="ORF">P9677.12</name>
</gene>
<sequence>MSNTSEDNITVRFVTENDKEGWQRLWKSYQDFYEVSFPDDLDDFNFGRFLDPNIKMWAAVAVESSSEKIIGMINFFNHMTTWDFKDKIYINDLYVDENSRVKGAGGKLIQFVYDEADKLGTPSVYWCTDESNHRAQLLYVKVGYKAPKILYKRKGY</sequence>
<protein>
    <recommendedName>
        <fullName evidence="4">Histone acetyltransferase HPA2</fullName>
        <ecNumber evidence="2 3">2.3.1.48</ecNumber>
    </recommendedName>
</protein>
<proteinExistence type="evidence at protein level"/>